<dbReference type="EMBL" id="AL591688">
    <property type="protein sequence ID" value="CAC45930.1"/>
    <property type="molecule type" value="Genomic_DNA"/>
</dbReference>
<dbReference type="RefSeq" id="NP_385457.1">
    <property type="nucleotide sequence ID" value="NC_003047.1"/>
</dbReference>
<dbReference type="RefSeq" id="WP_010969193.1">
    <property type="nucleotide sequence ID" value="NC_003047.1"/>
</dbReference>
<dbReference type="SMR" id="Q92QH4"/>
<dbReference type="EnsemblBacteria" id="CAC45930">
    <property type="protein sequence ID" value="CAC45930"/>
    <property type="gene ID" value="SMc01314"/>
</dbReference>
<dbReference type="GeneID" id="97364698"/>
<dbReference type="KEGG" id="sme:SMc01314"/>
<dbReference type="PATRIC" id="fig|266834.11.peg.2766"/>
<dbReference type="eggNOG" id="COG0048">
    <property type="taxonomic scope" value="Bacteria"/>
</dbReference>
<dbReference type="HOGENOM" id="CLU_104295_1_2_5"/>
<dbReference type="OrthoDB" id="9802366at2"/>
<dbReference type="Proteomes" id="UP000001976">
    <property type="component" value="Chromosome"/>
</dbReference>
<dbReference type="GO" id="GO:0015935">
    <property type="term" value="C:small ribosomal subunit"/>
    <property type="evidence" value="ECO:0007669"/>
    <property type="project" value="InterPro"/>
</dbReference>
<dbReference type="GO" id="GO:0019843">
    <property type="term" value="F:rRNA binding"/>
    <property type="evidence" value="ECO:0007669"/>
    <property type="project" value="UniProtKB-UniRule"/>
</dbReference>
<dbReference type="GO" id="GO:0003735">
    <property type="term" value="F:structural constituent of ribosome"/>
    <property type="evidence" value="ECO:0007669"/>
    <property type="project" value="InterPro"/>
</dbReference>
<dbReference type="GO" id="GO:0000049">
    <property type="term" value="F:tRNA binding"/>
    <property type="evidence" value="ECO:0007669"/>
    <property type="project" value="UniProtKB-UniRule"/>
</dbReference>
<dbReference type="GO" id="GO:0006412">
    <property type="term" value="P:translation"/>
    <property type="evidence" value="ECO:0007669"/>
    <property type="project" value="UniProtKB-UniRule"/>
</dbReference>
<dbReference type="CDD" id="cd03368">
    <property type="entry name" value="Ribosomal_S12"/>
    <property type="match status" value="1"/>
</dbReference>
<dbReference type="FunFam" id="2.40.50.140:FF:000001">
    <property type="entry name" value="30S ribosomal protein S12"/>
    <property type="match status" value="1"/>
</dbReference>
<dbReference type="Gene3D" id="2.40.50.140">
    <property type="entry name" value="Nucleic acid-binding proteins"/>
    <property type="match status" value="1"/>
</dbReference>
<dbReference type="HAMAP" id="MF_00403_B">
    <property type="entry name" value="Ribosomal_uS12_B"/>
    <property type="match status" value="1"/>
</dbReference>
<dbReference type="InterPro" id="IPR012340">
    <property type="entry name" value="NA-bd_OB-fold"/>
</dbReference>
<dbReference type="InterPro" id="IPR006032">
    <property type="entry name" value="Ribosomal_uS12"/>
</dbReference>
<dbReference type="InterPro" id="IPR005679">
    <property type="entry name" value="Ribosomal_uS12_bac"/>
</dbReference>
<dbReference type="NCBIfam" id="TIGR00981">
    <property type="entry name" value="rpsL_bact"/>
    <property type="match status" value="1"/>
</dbReference>
<dbReference type="PANTHER" id="PTHR11652">
    <property type="entry name" value="30S RIBOSOMAL PROTEIN S12 FAMILY MEMBER"/>
    <property type="match status" value="1"/>
</dbReference>
<dbReference type="Pfam" id="PF00164">
    <property type="entry name" value="Ribosom_S12_S23"/>
    <property type="match status" value="1"/>
</dbReference>
<dbReference type="PIRSF" id="PIRSF002133">
    <property type="entry name" value="Ribosomal_S12/S23"/>
    <property type="match status" value="1"/>
</dbReference>
<dbReference type="PRINTS" id="PR01034">
    <property type="entry name" value="RIBOSOMALS12"/>
</dbReference>
<dbReference type="SUPFAM" id="SSF50249">
    <property type="entry name" value="Nucleic acid-binding proteins"/>
    <property type="match status" value="1"/>
</dbReference>
<dbReference type="PROSITE" id="PS00055">
    <property type="entry name" value="RIBOSOMAL_S12"/>
    <property type="match status" value="1"/>
</dbReference>
<evidence type="ECO:0000250" key="1"/>
<evidence type="ECO:0000255" key="2">
    <source>
        <dbReference type="HAMAP-Rule" id="MF_00403"/>
    </source>
</evidence>
<evidence type="ECO:0000305" key="3"/>
<sequence>MPTVNQLIRKPRQAQVKRNKVPALQENPQKRGVCTRVYTTTPRKPNSALRKVAKIRLTNGFEVIGYIPGEGHNLQEHSVVMIRGGRVKDLPGVRYHIIRGVLDTQGVKNRKQRRSKYGAKRPK</sequence>
<gene>
    <name evidence="2" type="primary">rpsL</name>
    <name type="ordered locus">R01351</name>
    <name type="ORF">SMc01314</name>
</gene>
<organism>
    <name type="scientific">Rhizobium meliloti (strain 1021)</name>
    <name type="common">Ensifer meliloti</name>
    <name type="synonym">Sinorhizobium meliloti</name>
    <dbReference type="NCBI Taxonomy" id="266834"/>
    <lineage>
        <taxon>Bacteria</taxon>
        <taxon>Pseudomonadati</taxon>
        <taxon>Pseudomonadota</taxon>
        <taxon>Alphaproteobacteria</taxon>
        <taxon>Hyphomicrobiales</taxon>
        <taxon>Rhizobiaceae</taxon>
        <taxon>Sinorhizobium/Ensifer group</taxon>
        <taxon>Sinorhizobium</taxon>
    </lineage>
</organism>
<accession>Q92QH4</accession>
<proteinExistence type="inferred from homology"/>
<keyword id="KW-0488">Methylation</keyword>
<keyword id="KW-1185">Reference proteome</keyword>
<keyword id="KW-0687">Ribonucleoprotein</keyword>
<keyword id="KW-0689">Ribosomal protein</keyword>
<keyword id="KW-0694">RNA-binding</keyword>
<keyword id="KW-0699">rRNA-binding</keyword>
<keyword id="KW-0820">tRNA-binding</keyword>
<name>RS12_RHIME</name>
<reference key="1">
    <citation type="journal article" date="2001" name="Proc. Natl. Acad. Sci. U.S.A.">
        <title>Analysis of the chromosome sequence of the legume symbiont Sinorhizobium meliloti strain 1021.</title>
        <authorList>
            <person name="Capela D."/>
            <person name="Barloy-Hubler F."/>
            <person name="Gouzy J."/>
            <person name="Bothe G."/>
            <person name="Ampe F."/>
            <person name="Batut J."/>
            <person name="Boistard P."/>
            <person name="Becker A."/>
            <person name="Boutry M."/>
            <person name="Cadieu E."/>
            <person name="Dreano S."/>
            <person name="Gloux S."/>
            <person name="Godrie T."/>
            <person name="Goffeau A."/>
            <person name="Kahn D."/>
            <person name="Kiss E."/>
            <person name="Lelaure V."/>
            <person name="Masuy D."/>
            <person name="Pohl T."/>
            <person name="Portetelle D."/>
            <person name="Puehler A."/>
            <person name="Purnelle B."/>
            <person name="Ramsperger U."/>
            <person name="Renard C."/>
            <person name="Thebault P."/>
            <person name="Vandenbol M."/>
            <person name="Weidner S."/>
            <person name="Galibert F."/>
        </authorList>
    </citation>
    <scope>NUCLEOTIDE SEQUENCE [LARGE SCALE GENOMIC DNA]</scope>
    <source>
        <strain>1021</strain>
    </source>
</reference>
<reference key="2">
    <citation type="journal article" date="2001" name="Science">
        <title>The composite genome of the legume symbiont Sinorhizobium meliloti.</title>
        <authorList>
            <person name="Galibert F."/>
            <person name="Finan T.M."/>
            <person name="Long S.R."/>
            <person name="Puehler A."/>
            <person name="Abola P."/>
            <person name="Ampe F."/>
            <person name="Barloy-Hubler F."/>
            <person name="Barnett M.J."/>
            <person name="Becker A."/>
            <person name="Boistard P."/>
            <person name="Bothe G."/>
            <person name="Boutry M."/>
            <person name="Bowser L."/>
            <person name="Buhrmester J."/>
            <person name="Cadieu E."/>
            <person name="Capela D."/>
            <person name="Chain P."/>
            <person name="Cowie A."/>
            <person name="Davis R.W."/>
            <person name="Dreano S."/>
            <person name="Federspiel N.A."/>
            <person name="Fisher R.F."/>
            <person name="Gloux S."/>
            <person name="Godrie T."/>
            <person name="Goffeau A."/>
            <person name="Golding B."/>
            <person name="Gouzy J."/>
            <person name="Gurjal M."/>
            <person name="Hernandez-Lucas I."/>
            <person name="Hong A."/>
            <person name="Huizar L."/>
            <person name="Hyman R.W."/>
            <person name="Jones T."/>
            <person name="Kahn D."/>
            <person name="Kahn M.L."/>
            <person name="Kalman S."/>
            <person name="Keating D.H."/>
            <person name="Kiss E."/>
            <person name="Komp C."/>
            <person name="Lelaure V."/>
            <person name="Masuy D."/>
            <person name="Palm C."/>
            <person name="Peck M.C."/>
            <person name="Pohl T.M."/>
            <person name="Portetelle D."/>
            <person name="Purnelle B."/>
            <person name="Ramsperger U."/>
            <person name="Surzycki R."/>
            <person name="Thebault P."/>
            <person name="Vandenbol M."/>
            <person name="Vorhoelter F.J."/>
            <person name="Weidner S."/>
            <person name="Wells D.H."/>
            <person name="Wong K."/>
            <person name="Yeh K.-C."/>
            <person name="Batut J."/>
        </authorList>
    </citation>
    <scope>NUCLEOTIDE SEQUENCE [LARGE SCALE GENOMIC DNA]</scope>
    <source>
        <strain>1021</strain>
    </source>
</reference>
<feature type="chain" id="PRO_0000146295" description="Small ribosomal subunit protein uS12">
    <location>
        <begin position="1"/>
        <end position="123"/>
    </location>
</feature>
<feature type="modified residue" description="3-methylthioaspartic acid" evidence="1">
    <location>
        <position position="89"/>
    </location>
</feature>
<protein>
    <recommendedName>
        <fullName evidence="2">Small ribosomal subunit protein uS12</fullName>
    </recommendedName>
    <alternativeName>
        <fullName evidence="3">30S ribosomal protein S12</fullName>
    </alternativeName>
</protein>
<comment type="function">
    <text evidence="2">With S4 and S5 plays an important role in translational accuracy.</text>
</comment>
<comment type="function">
    <text evidence="2">Interacts with and stabilizes bases of the 16S rRNA that are involved in tRNA selection in the A site and with the mRNA backbone. Located at the interface of the 30S and 50S subunits, it traverses the body of the 30S subunit contacting proteins on the other side and probably holding the rRNA structure together. The combined cluster of proteins S8, S12 and S17 appears to hold together the shoulder and platform of the 30S subunit.</text>
</comment>
<comment type="subunit">
    <text evidence="2">Part of the 30S ribosomal subunit. Contacts proteins S8 and S17. May interact with IF1 in the 30S initiation complex.</text>
</comment>
<comment type="similarity">
    <text evidence="2">Belongs to the universal ribosomal protein uS12 family.</text>
</comment>